<dbReference type="EC" id="2.4.1.69" evidence="2"/>
<dbReference type="EC" id="2.4.1.344" evidence="3"/>
<dbReference type="EMBL" id="AF080605">
    <property type="protein sequence ID" value="AAF14067.1"/>
    <property type="molecule type" value="Genomic_DNA"/>
</dbReference>
<dbReference type="SMR" id="Q9TUD4"/>
<dbReference type="FunCoup" id="Q9TUD4">
    <property type="interactions" value="224"/>
</dbReference>
<dbReference type="STRING" id="9593.ENSGGOP00000001227"/>
<dbReference type="CAZy" id="GT11">
    <property type="family name" value="Glycosyltransferase Family 11"/>
</dbReference>
<dbReference type="GlyCosmos" id="Q9TUD4">
    <property type="glycosylation" value="3 sites, No reported glycans"/>
</dbReference>
<dbReference type="eggNOG" id="ENOG502S316">
    <property type="taxonomic scope" value="Eukaryota"/>
</dbReference>
<dbReference type="InParanoid" id="Q9TUD4"/>
<dbReference type="BRENDA" id="2.4.1.69">
    <property type="organism ID" value="2496"/>
</dbReference>
<dbReference type="UniPathway" id="UPA00378"/>
<dbReference type="Proteomes" id="UP000001519">
    <property type="component" value="Unplaced"/>
</dbReference>
<dbReference type="GO" id="GO:0032580">
    <property type="term" value="C:Golgi cisterna membrane"/>
    <property type="evidence" value="ECO:0007669"/>
    <property type="project" value="UniProtKB-SubCell"/>
</dbReference>
<dbReference type="GO" id="GO:0031127">
    <property type="term" value="F:alpha-(1,2)-fucosyltransferase activity"/>
    <property type="evidence" value="ECO:0000250"/>
    <property type="project" value="UniProtKB"/>
</dbReference>
<dbReference type="GO" id="GO:0008107">
    <property type="term" value="F:galactoside 2-alpha-L-fucosyltransferase activity"/>
    <property type="evidence" value="ECO:0000318"/>
    <property type="project" value="GO_Central"/>
</dbReference>
<dbReference type="GO" id="GO:0005975">
    <property type="term" value="P:carbohydrate metabolic process"/>
    <property type="evidence" value="ECO:0007669"/>
    <property type="project" value="InterPro"/>
</dbReference>
<dbReference type="GO" id="GO:0036065">
    <property type="term" value="P:fucosylation"/>
    <property type="evidence" value="ECO:0000250"/>
    <property type="project" value="UniProtKB"/>
</dbReference>
<dbReference type="GO" id="GO:0006629">
    <property type="term" value="P:lipid metabolic process"/>
    <property type="evidence" value="ECO:0007669"/>
    <property type="project" value="UniProtKB-KW"/>
</dbReference>
<dbReference type="GO" id="GO:0021772">
    <property type="term" value="P:olfactory bulb development"/>
    <property type="evidence" value="ECO:0000250"/>
    <property type="project" value="UniProtKB"/>
</dbReference>
<dbReference type="GO" id="GO:0001954">
    <property type="term" value="P:positive regulation of cell-matrix adhesion"/>
    <property type="evidence" value="ECO:0000250"/>
    <property type="project" value="UniProtKB"/>
</dbReference>
<dbReference type="GO" id="GO:0010595">
    <property type="term" value="P:positive regulation of endothelial cell migration"/>
    <property type="evidence" value="ECO:0000250"/>
    <property type="project" value="UniProtKB"/>
</dbReference>
<dbReference type="GO" id="GO:1904906">
    <property type="term" value="P:positive regulation of endothelial cell-matrix adhesion via fibronectin"/>
    <property type="evidence" value="ECO:0000250"/>
    <property type="project" value="UniProtKB"/>
</dbReference>
<dbReference type="GO" id="GO:1903672">
    <property type="term" value="P:positive regulation of sprouting angiogenesis"/>
    <property type="evidence" value="ECO:0000250"/>
    <property type="project" value="UniProtKB"/>
</dbReference>
<dbReference type="GO" id="GO:0006486">
    <property type="term" value="P:protein glycosylation"/>
    <property type="evidence" value="ECO:0000250"/>
    <property type="project" value="UniProtKB"/>
</dbReference>
<dbReference type="GO" id="GO:0030155">
    <property type="term" value="P:regulation of cell adhesion"/>
    <property type="evidence" value="ECO:0000250"/>
    <property type="project" value="UniProtKB"/>
</dbReference>
<dbReference type="GO" id="GO:0001936">
    <property type="term" value="P:regulation of endothelial cell proliferation"/>
    <property type="evidence" value="ECO:0000250"/>
    <property type="project" value="UniProtKB"/>
</dbReference>
<dbReference type="CDD" id="cd11301">
    <property type="entry name" value="Fut1_Fut2_like"/>
    <property type="match status" value="1"/>
</dbReference>
<dbReference type="InterPro" id="IPR002516">
    <property type="entry name" value="Glyco_trans_11"/>
</dbReference>
<dbReference type="PANTHER" id="PTHR11927">
    <property type="entry name" value="GALACTOSIDE 2-L-FUCOSYLTRANSFERASE"/>
    <property type="match status" value="1"/>
</dbReference>
<dbReference type="PANTHER" id="PTHR11927:SF4">
    <property type="entry name" value="GALACTOSIDE ALPHA-(1,2)-FUCOSYLTRANSFERASE 1"/>
    <property type="match status" value="1"/>
</dbReference>
<dbReference type="Pfam" id="PF01531">
    <property type="entry name" value="Glyco_transf_11"/>
    <property type="match status" value="1"/>
</dbReference>
<protein>
    <recommendedName>
        <fullName evidence="3">Galactoside alpha-(1,2)-fucosyltransferase 1</fullName>
    </recommendedName>
    <alternativeName>
        <fullName>Alpha(1,2)FT 1</fullName>
    </alternativeName>
    <alternativeName>
        <fullName>Fucosyltransferase 1</fullName>
    </alternativeName>
    <alternativeName>
        <fullName>GDP-L-fucose:beta-D-galactoside 2-alpha-L-fucosyltransferase 1</fullName>
    </alternativeName>
    <alternativeName>
        <fullName evidence="2">Type 1 galactoside alpha-(1,2)-fucosyltransferase FUT1</fullName>
        <ecNumber evidence="2">2.4.1.69</ecNumber>
    </alternativeName>
    <alternativeName>
        <fullName evidence="3">Type 2 galactoside alpha-(1,2)-fucosyltransferase FUT1</fullName>
        <ecNumber evidence="3">2.4.1.344</ecNumber>
    </alternativeName>
</protein>
<proteinExistence type="inferred from homology"/>
<reference key="1">
    <citation type="journal article" date="2000" name="Mol. Biol. Evol.">
        <title>Evolution of alpha 2-fucosyltransferase genes in primates: relation between an intronic Alu-Y element and red cell expression of ABH antigens.</title>
        <authorList>
            <person name="Apoil P.-A."/>
            <person name="Roubinet F."/>
            <person name="Despiau S."/>
            <person name="Mollicone R."/>
            <person name="Oriol R."/>
            <person name="Blancher A."/>
        </authorList>
    </citation>
    <scope>NUCLEOTIDE SEQUENCE [GENOMIC DNA]</scope>
    <source>
        <strain>Isolate Alexis</strain>
    </source>
</reference>
<gene>
    <name evidence="3" type="primary">FUT1</name>
</gene>
<organism>
    <name type="scientific">Gorilla gorilla gorilla</name>
    <name type="common">Western lowland gorilla</name>
    <dbReference type="NCBI Taxonomy" id="9595"/>
    <lineage>
        <taxon>Eukaryota</taxon>
        <taxon>Metazoa</taxon>
        <taxon>Chordata</taxon>
        <taxon>Craniata</taxon>
        <taxon>Vertebrata</taxon>
        <taxon>Euteleostomi</taxon>
        <taxon>Mammalia</taxon>
        <taxon>Eutheria</taxon>
        <taxon>Euarchontoglires</taxon>
        <taxon>Primates</taxon>
        <taxon>Haplorrhini</taxon>
        <taxon>Catarrhini</taxon>
        <taxon>Hominidae</taxon>
        <taxon>Gorilla</taxon>
    </lineage>
</organism>
<comment type="function">
    <text evidence="2 3">Catalyzes the transfer of L-fucose, from a guanosine diphosphate-beta-L-fucose, to the terminal galactose residue of glycoconjugates through an alpha(1,2) linkage leading to H antigen synthesis that is an intermediate substrate in the synthesis of ABO blood group antigens. H antigen is essential for maturation of the glomerular layer of the main olfactory bulb, in cell migration and early cell-cell contacts during tumor associated angiogenesis (By similarity). Preferentially fucosylates soluble lactose and to a lesser extent fucosylates glycolipids gangliosides GA1 and GM1a (By similarity).</text>
</comment>
<comment type="catalytic activity">
    <reaction evidence="3">
        <text>a beta-D-galactosyl-(1-&gt;4)-N-acetyl-beta-D-glucosaminyl derivative + GDP-beta-L-fucose = an alpha-L-Fuc-(1-&gt;2)-beta-D-Gal-(1-&gt;4)-beta-D-GlcNAc derivative + GDP + H(+)</text>
        <dbReference type="Rhea" id="RHEA:50668"/>
        <dbReference type="ChEBI" id="CHEBI:15378"/>
        <dbReference type="ChEBI" id="CHEBI:57273"/>
        <dbReference type="ChEBI" id="CHEBI:58189"/>
        <dbReference type="ChEBI" id="CHEBI:133507"/>
        <dbReference type="ChEBI" id="CHEBI:133510"/>
        <dbReference type="EC" id="2.4.1.344"/>
    </reaction>
</comment>
<comment type="catalytic activity">
    <reaction evidence="2">
        <text>a ganglioside GA1 + GDP-beta-L-fucose = a ganglioside Fuc-GA1 + GDP + H(+)</text>
        <dbReference type="Rhea" id="RHEA:48320"/>
        <dbReference type="ChEBI" id="CHEBI:15378"/>
        <dbReference type="ChEBI" id="CHEBI:57273"/>
        <dbReference type="ChEBI" id="CHEBI:58189"/>
        <dbReference type="ChEBI" id="CHEBI:88069"/>
        <dbReference type="ChEBI" id="CHEBI:90262"/>
    </reaction>
    <physiologicalReaction direction="left-to-right" evidence="2">
        <dbReference type="Rhea" id="RHEA:48321"/>
    </physiologicalReaction>
</comment>
<comment type="catalytic activity">
    <reaction evidence="2">
        <text>a beta-D-Gal-(1-&gt;3)-beta-D-GlcNAc-(1-&gt;3)-beta-D-Gal-(1-&gt;4)-beta-D-Glc-(1&lt;-&gt;1')-Cer(d18:1(4E)) + GDP-beta-L-fucose = alpha-L-fucosyl-(1-&gt;2)- beta-D-galactosyl-(1-&gt;3)-N-acetyl-beta-D-glucosaminyl-(1-&gt;3)-beta-D-galactosyl-(1-&gt;4)-beta-D-glucosyl-(1&lt;-&gt;1')-N-acylsphing-4-enine + GDP + H(+)</text>
        <dbReference type="Rhea" id="RHEA:32175"/>
        <dbReference type="ChEBI" id="CHEBI:15378"/>
        <dbReference type="ChEBI" id="CHEBI:17292"/>
        <dbReference type="ChEBI" id="CHEBI:28743"/>
        <dbReference type="ChEBI" id="CHEBI:57273"/>
        <dbReference type="ChEBI" id="CHEBI:58189"/>
        <dbReference type="EC" id="2.4.1.69"/>
    </reaction>
    <physiologicalReaction direction="left-to-right" evidence="2">
        <dbReference type="Rhea" id="RHEA:32176"/>
    </physiologicalReaction>
</comment>
<comment type="catalytic activity">
    <reaction evidence="2">
        <text>a neolactoside nLc4Cer(d18:1(4E)) + GDP-beta-L-fucose = a neolactoside IV(2)-alpha-Fuc-nLc4Cer(d18:1(4E)) + GDP + H(+)</text>
        <dbReference type="Rhea" id="RHEA:48304"/>
        <dbReference type="ChEBI" id="CHEBI:15378"/>
        <dbReference type="ChEBI" id="CHEBI:17006"/>
        <dbReference type="ChEBI" id="CHEBI:28691"/>
        <dbReference type="ChEBI" id="CHEBI:57273"/>
        <dbReference type="ChEBI" id="CHEBI:58189"/>
    </reaction>
    <physiologicalReaction direction="left-to-right" evidence="2">
        <dbReference type="Rhea" id="RHEA:48305"/>
    </physiologicalReaction>
</comment>
<comment type="catalytic activity">
    <reaction evidence="1">
        <text>a ganglioside GM1 + GDP-beta-L-fucose = a ganglioside Fuc-GM1 + GDP + H(+)</text>
        <dbReference type="Rhea" id="RHEA:48292"/>
        <dbReference type="ChEBI" id="CHEBI:15378"/>
        <dbReference type="ChEBI" id="CHEBI:57273"/>
        <dbReference type="ChEBI" id="CHEBI:58189"/>
        <dbReference type="ChEBI" id="CHEBI:82639"/>
        <dbReference type="ChEBI" id="CHEBI:90189"/>
    </reaction>
    <physiologicalReaction direction="left-to-right" evidence="1">
        <dbReference type="Rhea" id="RHEA:48293"/>
    </physiologicalReaction>
</comment>
<comment type="catalytic activity">
    <reaction evidence="1">
        <text>beta-D-galactosyl-(1-&gt;3)-N-acetyl-D-galactosamine + GDP-beta-L-fucose = alpha-L-fucosyl-(1-&gt;2)-beta-D-galactosyl-(1-&gt;3)-N-acetyl-D-galactosamine + GDP + H(+)</text>
        <dbReference type="Rhea" id="RHEA:62964"/>
        <dbReference type="ChEBI" id="CHEBI:15378"/>
        <dbReference type="ChEBI" id="CHEBI:57273"/>
        <dbReference type="ChEBI" id="CHEBI:58189"/>
        <dbReference type="ChEBI" id="CHEBI:84728"/>
        <dbReference type="ChEBI" id="CHEBI:546807"/>
    </reaction>
    <physiologicalReaction direction="left-to-right" evidence="1">
        <dbReference type="Rhea" id="RHEA:62965"/>
    </physiologicalReaction>
</comment>
<comment type="pathway">
    <text evidence="3">Protein modification; protein glycosylation.</text>
</comment>
<comment type="subcellular location">
    <subcellularLocation>
        <location evidence="2">Golgi apparatus</location>
        <location evidence="2">Golgi stack membrane</location>
        <topology evidence="2">Single-pass type II membrane protein</topology>
    </subcellularLocation>
    <text evidence="2">Membrane-bound form in trans cisternae of Golgi.</text>
</comment>
<comment type="similarity">
    <text evidence="5">Belongs to the glycosyltransferase 11 family.</text>
</comment>
<evidence type="ECO:0000250" key="1">
    <source>
        <dbReference type="UniProtKB" id="F6Q1T7"/>
    </source>
</evidence>
<evidence type="ECO:0000250" key="2">
    <source>
        <dbReference type="UniProtKB" id="O09160"/>
    </source>
</evidence>
<evidence type="ECO:0000250" key="3">
    <source>
        <dbReference type="UniProtKB" id="P19526"/>
    </source>
</evidence>
<evidence type="ECO:0000255" key="4"/>
<evidence type="ECO:0000305" key="5"/>
<name>FUT1_GORGO</name>
<keyword id="KW-0325">Glycoprotein</keyword>
<keyword id="KW-0328">Glycosyltransferase</keyword>
<keyword id="KW-0333">Golgi apparatus</keyword>
<keyword id="KW-0443">Lipid metabolism</keyword>
<keyword id="KW-0472">Membrane</keyword>
<keyword id="KW-1185">Reference proteome</keyword>
<keyword id="KW-0735">Signal-anchor</keyword>
<keyword id="KW-0808">Transferase</keyword>
<keyword id="KW-0812">Transmembrane</keyword>
<keyword id="KW-1133">Transmembrane helix</keyword>
<accession>Q9TUD4</accession>
<feature type="chain" id="PRO_0000149094" description="Galactoside alpha-(1,2)-fucosyltransferase 1">
    <location>
        <begin position="1"/>
        <end position="366"/>
    </location>
</feature>
<feature type="topological domain" description="Cytoplasmic" evidence="4">
    <location>
        <begin position="1"/>
        <end position="8"/>
    </location>
</feature>
<feature type="transmembrane region" description="Helical; Signal-anchor for type II membrane protein" evidence="4">
    <location>
        <begin position="9"/>
        <end position="25"/>
    </location>
</feature>
<feature type="topological domain" description="Lumenal" evidence="4">
    <location>
        <begin position="26"/>
        <end position="366"/>
    </location>
</feature>
<feature type="glycosylation site" description="N-linked (GlcNAc...) asparagine" evidence="4">
    <location>
        <position position="66"/>
    </location>
</feature>
<feature type="glycosylation site" description="N-linked (GlcNAc...) asparagine" evidence="4">
    <location>
        <position position="302"/>
    </location>
</feature>
<feature type="glycosylation site" description="N-linked (GlcNAc...) asparagine" evidence="4">
    <location>
        <position position="328"/>
    </location>
</feature>
<sequence>MWPPSHRQLCRAFLLVCVFSVISFFLHIHQDSFPHGLGLSILCPDRRLVTPPVAIFCLPGTAMGPNASSSCPQHPASLSGTWTVYPNGRFGNQMGQYATLLALAQLNGRRAFILPAMHAALAPVFRITLPVLAPEVDSRTPWRELQLHDWMSEEYADLGDPFLKLSGFPCSWTFFHHLREQIRREFTLHDHLREEAQSVLGQLRLGRTGDRPRTFVGVHVRRGDYLQVMPQRWKGVVGDSAYLRQAMDWFRARHEAPVFVVTSNGMEWCKENIDTSQGDVTFAGDGQEATPWKDFALLTQCNHTIMTIGTFGFWAAYLAGGDTVYLANFTLPDSEFLKIFKPEAAFLPEWVGINADLSPLWTLAKP</sequence>